<evidence type="ECO:0000255" key="1">
    <source>
        <dbReference type="HAMAP-Rule" id="MF_00012"/>
    </source>
</evidence>
<proteinExistence type="inferred from homology"/>
<keyword id="KW-0001">2Fe-2S</keyword>
<keyword id="KW-0028">Amino-acid biosynthesis</keyword>
<keyword id="KW-0100">Branched-chain amino acid biosynthesis</keyword>
<keyword id="KW-0408">Iron</keyword>
<keyword id="KW-0411">Iron-sulfur</keyword>
<keyword id="KW-0456">Lyase</keyword>
<keyword id="KW-0460">Magnesium</keyword>
<keyword id="KW-0479">Metal-binding</keyword>
<name>ILVD_LISIN</name>
<dbReference type="EC" id="4.2.1.9" evidence="1"/>
<dbReference type="EMBL" id="AL596171">
    <property type="protein sequence ID" value="CAC97320.1"/>
    <property type="molecule type" value="Genomic_DNA"/>
</dbReference>
<dbReference type="PIR" id="AH1693">
    <property type="entry name" value="AH1693"/>
</dbReference>
<dbReference type="RefSeq" id="WP_003769508.1">
    <property type="nucleotide sequence ID" value="NC_003212.1"/>
</dbReference>
<dbReference type="SMR" id="Q92A32"/>
<dbReference type="STRING" id="272626.gene:17566448"/>
<dbReference type="GeneID" id="93235429"/>
<dbReference type="KEGG" id="lin:ilvD"/>
<dbReference type="eggNOG" id="COG0129">
    <property type="taxonomic scope" value="Bacteria"/>
</dbReference>
<dbReference type="HOGENOM" id="CLU_014271_4_2_9"/>
<dbReference type="OrthoDB" id="9807077at2"/>
<dbReference type="UniPathway" id="UPA00047">
    <property type="reaction ID" value="UER00057"/>
</dbReference>
<dbReference type="UniPathway" id="UPA00049">
    <property type="reaction ID" value="UER00061"/>
</dbReference>
<dbReference type="Proteomes" id="UP000002513">
    <property type="component" value="Chromosome"/>
</dbReference>
<dbReference type="GO" id="GO:0005829">
    <property type="term" value="C:cytosol"/>
    <property type="evidence" value="ECO:0007669"/>
    <property type="project" value="TreeGrafter"/>
</dbReference>
<dbReference type="GO" id="GO:0051537">
    <property type="term" value="F:2 iron, 2 sulfur cluster binding"/>
    <property type="evidence" value="ECO:0007669"/>
    <property type="project" value="UniProtKB-UniRule"/>
</dbReference>
<dbReference type="GO" id="GO:0004160">
    <property type="term" value="F:dihydroxy-acid dehydratase activity"/>
    <property type="evidence" value="ECO:0007669"/>
    <property type="project" value="UniProtKB-UniRule"/>
</dbReference>
<dbReference type="GO" id="GO:0000287">
    <property type="term" value="F:magnesium ion binding"/>
    <property type="evidence" value="ECO:0007669"/>
    <property type="project" value="UniProtKB-UniRule"/>
</dbReference>
<dbReference type="GO" id="GO:0009097">
    <property type="term" value="P:isoleucine biosynthetic process"/>
    <property type="evidence" value="ECO:0007669"/>
    <property type="project" value="UniProtKB-UniRule"/>
</dbReference>
<dbReference type="GO" id="GO:0009099">
    <property type="term" value="P:L-valine biosynthetic process"/>
    <property type="evidence" value="ECO:0007669"/>
    <property type="project" value="UniProtKB-UniRule"/>
</dbReference>
<dbReference type="FunFam" id="3.50.30.80:FF:000001">
    <property type="entry name" value="Dihydroxy-acid dehydratase"/>
    <property type="match status" value="1"/>
</dbReference>
<dbReference type="Gene3D" id="3.50.30.80">
    <property type="entry name" value="IlvD/EDD C-terminal domain-like"/>
    <property type="match status" value="1"/>
</dbReference>
<dbReference type="HAMAP" id="MF_00012">
    <property type="entry name" value="IlvD"/>
    <property type="match status" value="1"/>
</dbReference>
<dbReference type="InterPro" id="IPR042096">
    <property type="entry name" value="Dihydro-acid_dehy_C"/>
</dbReference>
<dbReference type="InterPro" id="IPR004404">
    <property type="entry name" value="DihydroxyA_deHydtase"/>
</dbReference>
<dbReference type="InterPro" id="IPR020558">
    <property type="entry name" value="DiOHA_6PGluconate_deHydtase_CS"/>
</dbReference>
<dbReference type="InterPro" id="IPR056740">
    <property type="entry name" value="ILV_EDD_C"/>
</dbReference>
<dbReference type="InterPro" id="IPR000581">
    <property type="entry name" value="ILV_EDD_N"/>
</dbReference>
<dbReference type="InterPro" id="IPR037237">
    <property type="entry name" value="IlvD/EDD_N"/>
</dbReference>
<dbReference type="NCBIfam" id="TIGR00110">
    <property type="entry name" value="ilvD"/>
    <property type="match status" value="1"/>
</dbReference>
<dbReference type="NCBIfam" id="NF002068">
    <property type="entry name" value="PRK00911.1"/>
    <property type="match status" value="1"/>
</dbReference>
<dbReference type="PANTHER" id="PTHR43661">
    <property type="entry name" value="D-XYLONATE DEHYDRATASE"/>
    <property type="match status" value="1"/>
</dbReference>
<dbReference type="PANTHER" id="PTHR43661:SF3">
    <property type="entry name" value="D-XYLONATE DEHYDRATASE YAGF-RELATED"/>
    <property type="match status" value="1"/>
</dbReference>
<dbReference type="Pfam" id="PF24877">
    <property type="entry name" value="ILV_EDD_C"/>
    <property type="match status" value="1"/>
</dbReference>
<dbReference type="Pfam" id="PF00920">
    <property type="entry name" value="ILVD_EDD_N"/>
    <property type="match status" value="1"/>
</dbReference>
<dbReference type="SUPFAM" id="SSF143975">
    <property type="entry name" value="IlvD/EDD N-terminal domain-like"/>
    <property type="match status" value="1"/>
</dbReference>
<dbReference type="SUPFAM" id="SSF52016">
    <property type="entry name" value="LeuD/IlvD-like"/>
    <property type="match status" value="1"/>
</dbReference>
<dbReference type="PROSITE" id="PS00886">
    <property type="entry name" value="ILVD_EDD_1"/>
    <property type="match status" value="1"/>
</dbReference>
<dbReference type="PROSITE" id="PS00887">
    <property type="entry name" value="ILVD_EDD_2"/>
    <property type="match status" value="1"/>
</dbReference>
<organism>
    <name type="scientific">Listeria innocua serovar 6a (strain ATCC BAA-680 / CLIP 11262)</name>
    <dbReference type="NCBI Taxonomy" id="272626"/>
    <lineage>
        <taxon>Bacteria</taxon>
        <taxon>Bacillati</taxon>
        <taxon>Bacillota</taxon>
        <taxon>Bacilli</taxon>
        <taxon>Bacillales</taxon>
        <taxon>Listeriaceae</taxon>
        <taxon>Listeria</taxon>
    </lineage>
</organism>
<reference key="1">
    <citation type="journal article" date="2001" name="Science">
        <title>Comparative genomics of Listeria species.</title>
        <authorList>
            <person name="Glaser P."/>
            <person name="Frangeul L."/>
            <person name="Buchrieser C."/>
            <person name="Rusniok C."/>
            <person name="Amend A."/>
            <person name="Baquero F."/>
            <person name="Berche P."/>
            <person name="Bloecker H."/>
            <person name="Brandt P."/>
            <person name="Chakraborty T."/>
            <person name="Charbit A."/>
            <person name="Chetouani F."/>
            <person name="Couve E."/>
            <person name="de Daruvar A."/>
            <person name="Dehoux P."/>
            <person name="Domann E."/>
            <person name="Dominguez-Bernal G."/>
            <person name="Duchaud E."/>
            <person name="Durant L."/>
            <person name="Dussurget O."/>
            <person name="Entian K.-D."/>
            <person name="Fsihi H."/>
            <person name="Garcia-del Portillo F."/>
            <person name="Garrido P."/>
            <person name="Gautier L."/>
            <person name="Goebel W."/>
            <person name="Gomez-Lopez N."/>
            <person name="Hain T."/>
            <person name="Hauf J."/>
            <person name="Jackson D."/>
            <person name="Jones L.-M."/>
            <person name="Kaerst U."/>
            <person name="Kreft J."/>
            <person name="Kuhn M."/>
            <person name="Kunst F."/>
            <person name="Kurapkat G."/>
            <person name="Madueno E."/>
            <person name="Maitournam A."/>
            <person name="Mata Vicente J."/>
            <person name="Ng E."/>
            <person name="Nedjari H."/>
            <person name="Nordsiek G."/>
            <person name="Novella S."/>
            <person name="de Pablos B."/>
            <person name="Perez-Diaz J.-C."/>
            <person name="Purcell R."/>
            <person name="Remmel B."/>
            <person name="Rose M."/>
            <person name="Schlueter T."/>
            <person name="Simoes N."/>
            <person name="Tierrez A."/>
            <person name="Vazquez-Boland J.-A."/>
            <person name="Voss H."/>
            <person name="Wehland J."/>
            <person name="Cossart P."/>
        </authorList>
    </citation>
    <scope>NUCLEOTIDE SEQUENCE [LARGE SCALE GENOMIC DNA]</scope>
    <source>
        <strain>ATCC BAA-680 / CLIP 11262</strain>
    </source>
</reference>
<gene>
    <name evidence="1" type="primary">ilvD</name>
    <name type="ordered locus">lin2090</name>
</gene>
<accession>Q92A32</accession>
<comment type="function">
    <text evidence="1">Functions in the biosynthesis of branched-chain amino acids. Catalyzes the dehydration of (2R,3R)-2,3-dihydroxy-3-methylpentanoate (2,3-dihydroxy-3-methylvalerate) into 2-oxo-3-methylpentanoate (2-oxo-3-methylvalerate) and of (2R)-2,3-dihydroxy-3-methylbutanoate (2,3-dihydroxyisovalerate) into 2-oxo-3-methylbutanoate (2-oxoisovalerate), the penultimate precursor to L-isoleucine and L-valine, respectively.</text>
</comment>
<comment type="catalytic activity">
    <reaction evidence="1">
        <text>(2R)-2,3-dihydroxy-3-methylbutanoate = 3-methyl-2-oxobutanoate + H2O</text>
        <dbReference type="Rhea" id="RHEA:24809"/>
        <dbReference type="ChEBI" id="CHEBI:11851"/>
        <dbReference type="ChEBI" id="CHEBI:15377"/>
        <dbReference type="ChEBI" id="CHEBI:49072"/>
        <dbReference type="EC" id="4.2.1.9"/>
    </reaction>
    <physiologicalReaction direction="left-to-right" evidence="1">
        <dbReference type="Rhea" id="RHEA:24810"/>
    </physiologicalReaction>
</comment>
<comment type="catalytic activity">
    <reaction evidence="1">
        <text>(2R,3R)-2,3-dihydroxy-3-methylpentanoate = (S)-3-methyl-2-oxopentanoate + H2O</text>
        <dbReference type="Rhea" id="RHEA:27694"/>
        <dbReference type="ChEBI" id="CHEBI:15377"/>
        <dbReference type="ChEBI" id="CHEBI:35146"/>
        <dbReference type="ChEBI" id="CHEBI:49258"/>
        <dbReference type="EC" id="4.2.1.9"/>
    </reaction>
    <physiologicalReaction direction="left-to-right" evidence="1">
        <dbReference type="Rhea" id="RHEA:27695"/>
    </physiologicalReaction>
</comment>
<comment type="cofactor">
    <cofactor evidence="1">
        <name>[2Fe-2S] cluster</name>
        <dbReference type="ChEBI" id="CHEBI:190135"/>
    </cofactor>
    <text evidence="1">Binds 1 [2Fe-2S] cluster per subunit. This cluster acts as a Lewis acid cofactor.</text>
</comment>
<comment type="cofactor">
    <cofactor evidence="1">
        <name>Mg(2+)</name>
        <dbReference type="ChEBI" id="CHEBI:18420"/>
    </cofactor>
</comment>
<comment type="pathway">
    <text evidence="1">Amino-acid biosynthesis; L-isoleucine biosynthesis; L-isoleucine from 2-oxobutanoate: step 3/4.</text>
</comment>
<comment type="pathway">
    <text evidence="1">Amino-acid biosynthesis; L-valine biosynthesis; L-valine from pyruvate: step 3/4.</text>
</comment>
<comment type="subunit">
    <text evidence="1">Homodimer.</text>
</comment>
<comment type="similarity">
    <text evidence="1">Belongs to the IlvD/Edd family.</text>
</comment>
<feature type="chain" id="PRO_0000103476" description="Dihydroxy-acid dehydratase">
    <location>
        <begin position="1"/>
        <end position="564"/>
    </location>
</feature>
<feature type="active site" description="Proton acceptor" evidence="1">
    <location>
        <position position="473"/>
    </location>
</feature>
<feature type="binding site" evidence="1">
    <location>
        <position position="80"/>
    </location>
    <ligand>
        <name>Mg(2+)</name>
        <dbReference type="ChEBI" id="CHEBI:18420"/>
    </ligand>
</feature>
<feature type="binding site" evidence="1">
    <location>
        <position position="121"/>
    </location>
    <ligand>
        <name>[2Fe-2S] cluster</name>
        <dbReference type="ChEBI" id="CHEBI:190135"/>
    </ligand>
</feature>
<feature type="binding site" evidence="1">
    <location>
        <position position="122"/>
    </location>
    <ligand>
        <name>Mg(2+)</name>
        <dbReference type="ChEBI" id="CHEBI:18420"/>
    </ligand>
</feature>
<feature type="binding site" description="via carbamate group" evidence="1">
    <location>
        <position position="123"/>
    </location>
    <ligand>
        <name>Mg(2+)</name>
        <dbReference type="ChEBI" id="CHEBI:18420"/>
    </ligand>
</feature>
<feature type="binding site" evidence="1">
    <location>
        <position position="194"/>
    </location>
    <ligand>
        <name>[2Fe-2S] cluster</name>
        <dbReference type="ChEBI" id="CHEBI:190135"/>
    </ligand>
</feature>
<feature type="binding site" evidence="1">
    <location>
        <position position="447"/>
    </location>
    <ligand>
        <name>Mg(2+)</name>
        <dbReference type="ChEBI" id="CHEBI:18420"/>
    </ligand>
</feature>
<feature type="modified residue" description="N6-carboxylysine" evidence="1">
    <location>
        <position position="123"/>
    </location>
</feature>
<sequence length="564" mass="59947">MRSDKIKKGVEQAPARSLLHATGQIKSPGDMDKPFIAICNSYIDIVPGHVHLRELADVAKEAIREAGGIPFEFNTIGVDDGIAMGHIGMRYSLPSREVIADAAETVINAHWFDGVFYIPNCDKITPGMLLASVRTNVPAIFCSGGPMKAGLSAHGKALTLSSVFEAVGAFKEGSMSQEDFLDMEANACPTCGSCAGMFTANSMNCLMEILGMAVPGNGTTLAVSDARRELIRESAFHLMDLVKKDIRPRDIITKDAIDDAFALDMAMGGSTNTVLHTLALANEAGIEDYDLERINDIAKRVPYLSKIAPSSSYSMHDVHEAGGVSAIIKELVDLGGAIHPDRITVTGKTIRENVADAKINNTDVIHPKENPYSPVGGLSMLFGNIAPKGATIKVGGVDPSVQVFKGEAICFSSHDEAVEAIDNHTVREGHVVVIRYEGPKGGPGMPEMLAPTSSIVGRGLGKDVALITDGRFSGATRGIAVGHISPEAAAGGPIALVHDGDIITIDLPNRTLNVDVPDEVLEERRKELPKFKAKVKTGYLARYTALVTSAHTGGILQIPEDLID</sequence>
<protein>
    <recommendedName>
        <fullName evidence="1">Dihydroxy-acid dehydratase</fullName>
        <shortName evidence="1">DAD</shortName>
        <ecNumber evidence="1">4.2.1.9</ecNumber>
    </recommendedName>
</protein>